<sequence length="434" mass="50332">MNNKDDLFIQKILITGGAGFIGSHLAIYLTKKFKNSKIIVLDKLDYCSNINNLGCVLKELNFKFYKGNILDSELLENIFEKEKIDIVIHLAAYTHVDNSFKQSIKFTENNILGTHYLLETCKNYKLKKFIYVSTDEVYGSGLIEDNDDNNNSINQSSNEKSILNPTNPYSASKAGAEHLVQSYYKSFKLPVIITRANNIYGPKQYPEKIIPKFINLLLNNKKCTIHGTGKNTRNYLYIDDIVSAFDIILRKGEIGNVYNIGTDFEISNLDVAKKIINISINLNNNNNNNNNNNNNNNNNNNNNNNNNNNDFNIMDYKKFINYIDDRPFNDHRYNINYSKLSNLGWKKSISWEEGIEKTFIWYKNNRNYWLNLNVDSYENINNDNNFKYFGNQNNNNENNNNDNNENNNNCRVCSNIDLNYGEKKPFHLTLKSEE</sequence>
<protein>
    <recommendedName>
        <fullName>dTDP-D-glucose 4,6-dehydratase</fullName>
        <ecNumber>4.2.1.46</ecNumber>
    </recommendedName>
</protein>
<dbReference type="EC" id="4.2.1.46"/>
<dbReference type="EMBL" id="AAFI02000031">
    <property type="protein sequence ID" value="EAL67671.1"/>
    <property type="molecule type" value="Genomic_DNA"/>
</dbReference>
<dbReference type="RefSeq" id="XP_641641.1">
    <property type="nucleotide sequence ID" value="XM_636549.1"/>
</dbReference>
<dbReference type="SMR" id="Q54WS6"/>
<dbReference type="FunCoup" id="Q54WS6">
    <property type="interactions" value="27"/>
</dbReference>
<dbReference type="STRING" id="44689.Q54WS6"/>
<dbReference type="PaxDb" id="44689-DDB0231748"/>
<dbReference type="EnsemblProtists" id="EAL67671">
    <property type="protein sequence ID" value="EAL67671"/>
    <property type="gene ID" value="DDB_G0279465"/>
</dbReference>
<dbReference type="GeneID" id="8622047"/>
<dbReference type="KEGG" id="ddi:DDB_G0279465"/>
<dbReference type="dictyBase" id="DDB_G0279465">
    <property type="gene designation" value="tgds"/>
</dbReference>
<dbReference type="VEuPathDB" id="AmoebaDB:DDB_G0279465"/>
<dbReference type="eggNOG" id="KOG0747">
    <property type="taxonomic scope" value="Eukaryota"/>
</dbReference>
<dbReference type="HOGENOM" id="CLU_007383_1_14_1"/>
<dbReference type="InParanoid" id="Q54WS6"/>
<dbReference type="OMA" id="KLIPLMC"/>
<dbReference type="PhylomeDB" id="Q54WS6"/>
<dbReference type="PRO" id="PR:Q54WS6"/>
<dbReference type="Proteomes" id="UP000002195">
    <property type="component" value="Chromosome 3"/>
</dbReference>
<dbReference type="GO" id="GO:0008460">
    <property type="term" value="F:dTDP-glucose 4,6-dehydratase activity"/>
    <property type="evidence" value="ECO:0000318"/>
    <property type="project" value="GO_Central"/>
</dbReference>
<dbReference type="GO" id="GO:0009225">
    <property type="term" value="P:nucleotide-sugar metabolic process"/>
    <property type="evidence" value="ECO:0007669"/>
    <property type="project" value="InterPro"/>
</dbReference>
<dbReference type="CDD" id="cd05246">
    <property type="entry name" value="dTDP_GD_SDR_e"/>
    <property type="match status" value="1"/>
</dbReference>
<dbReference type="FunFam" id="3.40.50.720:FF:000304">
    <property type="entry name" value="UDP-glucose 4,6-dehydratase"/>
    <property type="match status" value="1"/>
</dbReference>
<dbReference type="Gene3D" id="3.40.50.720">
    <property type="entry name" value="NAD(P)-binding Rossmann-like Domain"/>
    <property type="match status" value="1"/>
</dbReference>
<dbReference type="Gene3D" id="3.90.25.10">
    <property type="entry name" value="UDP-galactose 4-epimerase, domain 1"/>
    <property type="match status" value="1"/>
</dbReference>
<dbReference type="InterPro" id="IPR005888">
    <property type="entry name" value="dTDP_Gluc_deHydtase"/>
</dbReference>
<dbReference type="InterPro" id="IPR016040">
    <property type="entry name" value="NAD(P)-bd_dom"/>
</dbReference>
<dbReference type="InterPro" id="IPR036291">
    <property type="entry name" value="NAD(P)-bd_dom_sf"/>
</dbReference>
<dbReference type="PANTHER" id="PTHR43000">
    <property type="entry name" value="DTDP-D-GLUCOSE 4,6-DEHYDRATASE-RELATED"/>
    <property type="match status" value="1"/>
</dbReference>
<dbReference type="Pfam" id="PF16363">
    <property type="entry name" value="GDP_Man_Dehyd"/>
    <property type="match status" value="1"/>
</dbReference>
<dbReference type="SUPFAM" id="SSF51735">
    <property type="entry name" value="NAD(P)-binding Rossmann-fold domains"/>
    <property type="match status" value="1"/>
</dbReference>
<keyword id="KW-0456">Lyase</keyword>
<keyword id="KW-0520">NAD</keyword>
<keyword id="KW-1185">Reference proteome</keyword>
<evidence type="ECO:0000250" key="1"/>
<evidence type="ECO:0000256" key="2">
    <source>
        <dbReference type="SAM" id="MobiDB-lite"/>
    </source>
</evidence>
<evidence type="ECO:0000305" key="3"/>
<organism>
    <name type="scientific">Dictyostelium discoideum</name>
    <name type="common">Social amoeba</name>
    <dbReference type="NCBI Taxonomy" id="44689"/>
    <lineage>
        <taxon>Eukaryota</taxon>
        <taxon>Amoebozoa</taxon>
        <taxon>Evosea</taxon>
        <taxon>Eumycetozoa</taxon>
        <taxon>Dictyostelia</taxon>
        <taxon>Dictyosteliales</taxon>
        <taxon>Dictyosteliaceae</taxon>
        <taxon>Dictyostelium</taxon>
    </lineage>
</organism>
<name>TGDS_DICDI</name>
<reference key="1">
    <citation type="journal article" date="2005" name="Nature">
        <title>The genome of the social amoeba Dictyostelium discoideum.</title>
        <authorList>
            <person name="Eichinger L."/>
            <person name="Pachebat J.A."/>
            <person name="Gloeckner G."/>
            <person name="Rajandream M.A."/>
            <person name="Sucgang R."/>
            <person name="Berriman M."/>
            <person name="Song J."/>
            <person name="Olsen R."/>
            <person name="Szafranski K."/>
            <person name="Xu Q."/>
            <person name="Tunggal B."/>
            <person name="Kummerfeld S."/>
            <person name="Madera M."/>
            <person name="Konfortov B.A."/>
            <person name="Rivero F."/>
            <person name="Bankier A.T."/>
            <person name="Lehmann R."/>
            <person name="Hamlin N."/>
            <person name="Davies R."/>
            <person name="Gaudet P."/>
            <person name="Fey P."/>
            <person name="Pilcher K."/>
            <person name="Chen G."/>
            <person name="Saunders D."/>
            <person name="Sodergren E.J."/>
            <person name="Davis P."/>
            <person name="Kerhornou A."/>
            <person name="Nie X."/>
            <person name="Hall N."/>
            <person name="Anjard C."/>
            <person name="Hemphill L."/>
            <person name="Bason N."/>
            <person name="Farbrother P."/>
            <person name="Desany B."/>
            <person name="Just E."/>
            <person name="Morio T."/>
            <person name="Rost R."/>
            <person name="Churcher C.M."/>
            <person name="Cooper J."/>
            <person name="Haydock S."/>
            <person name="van Driessche N."/>
            <person name="Cronin A."/>
            <person name="Goodhead I."/>
            <person name="Muzny D.M."/>
            <person name="Mourier T."/>
            <person name="Pain A."/>
            <person name="Lu M."/>
            <person name="Harper D."/>
            <person name="Lindsay R."/>
            <person name="Hauser H."/>
            <person name="James K.D."/>
            <person name="Quiles M."/>
            <person name="Madan Babu M."/>
            <person name="Saito T."/>
            <person name="Buchrieser C."/>
            <person name="Wardroper A."/>
            <person name="Felder M."/>
            <person name="Thangavelu M."/>
            <person name="Johnson D."/>
            <person name="Knights A."/>
            <person name="Loulseged H."/>
            <person name="Mungall K.L."/>
            <person name="Oliver K."/>
            <person name="Price C."/>
            <person name="Quail M.A."/>
            <person name="Urushihara H."/>
            <person name="Hernandez J."/>
            <person name="Rabbinowitsch E."/>
            <person name="Steffen D."/>
            <person name="Sanders M."/>
            <person name="Ma J."/>
            <person name="Kohara Y."/>
            <person name="Sharp S."/>
            <person name="Simmonds M.N."/>
            <person name="Spiegler S."/>
            <person name="Tivey A."/>
            <person name="Sugano S."/>
            <person name="White B."/>
            <person name="Walker D."/>
            <person name="Woodward J.R."/>
            <person name="Winckler T."/>
            <person name="Tanaka Y."/>
            <person name="Shaulsky G."/>
            <person name="Schleicher M."/>
            <person name="Weinstock G.M."/>
            <person name="Rosenthal A."/>
            <person name="Cox E.C."/>
            <person name="Chisholm R.L."/>
            <person name="Gibbs R.A."/>
            <person name="Loomis W.F."/>
            <person name="Platzer M."/>
            <person name="Kay R.R."/>
            <person name="Williams J.G."/>
            <person name="Dear P.H."/>
            <person name="Noegel A.A."/>
            <person name="Barrell B.G."/>
            <person name="Kuspa A."/>
        </authorList>
    </citation>
    <scope>NUCLEOTIDE SEQUENCE [LARGE SCALE GENOMIC DNA]</scope>
    <source>
        <strain>AX4</strain>
    </source>
</reference>
<proteinExistence type="inferred from homology"/>
<feature type="chain" id="PRO_0000328214" description="dTDP-D-glucose 4,6-dehydratase">
    <location>
        <begin position="1"/>
        <end position="434"/>
    </location>
</feature>
<feature type="region of interest" description="Disordered" evidence="2">
    <location>
        <begin position="286"/>
        <end position="310"/>
    </location>
</feature>
<feature type="compositionally biased region" description="Low complexity" evidence="2">
    <location>
        <begin position="286"/>
        <end position="309"/>
    </location>
</feature>
<feature type="active site" description="Proton donor" evidence="1">
    <location>
        <position position="135"/>
    </location>
</feature>
<feature type="active site" description="Proton acceptor" evidence="1">
    <location>
        <position position="136"/>
    </location>
</feature>
<feature type="active site" description="Proton acceptor" evidence="1">
    <location>
        <position position="169"/>
    </location>
</feature>
<feature type="binding site" evidence="1">
    <location>
        <position position="134"/>
    </location>
    <ligand>
        <name>substrate</name>
    </ligand>
</feature>
<comment type="catalytic activity">
    <reaction>
        <text>dTDP-alpha-D-glucose = dTDP-4-dehydro-6-deoxy-alpha-D-glucose + H2O</text>
        <dbReference type="Rhea" id="RHEA:17221"/>
        <dbReference type="ChEBI" id="CHEBI:15377"/>
        <dbReference type="ChEBI" id="CHEBI:57477"/>
        <dbReference type="ChEBI" id="CHEBI:57649"/>
        <dbReference type="EC" id="4.2.1.46"/>
    </reaction>
</comment>
<comment type="cofactor">
    <cofactor evidence="1">
        <name>NAD(+)</name>
        <dbReference type="ChEBI" id="CHEBI:57540"/>
    </cofactor>
</comment>
<comment type="similarity">
    <text evidence="3">Belongs to the NAD(P)-dependent epimerase/dehydratase family. dTDP-glucose dehydratase subfamily.</text>
</comment>
<gene>
    <name type="primary">tgds</name>
    <name type="ORF">DDB_G0279465</name>
</gene>
<accession>Q54WS6</accession>